<organism>
    <name type="scientific">Mycobacterium ulcerans (strain Agy99)</name>
    <dbReference type="NCBI Taxonomy" id="362242"/>
    <lineage>
        <taxon>Bacteria</taxon>
        <taxon>Bacillati</taxon>
        <taxon>Actinomycetota</taxon>
        <taxon>Actinomycetes</taxon>
        <taxon>Mycobacteriales</taxon>
        <taxon>Mycobacteriaceae</taxon>
        <taxon>Mycobacterium</taxon>
        <taxon>Mycobacterium ulcerans group</taxon>
    </lineage>
</organism>
<proteinExistence type="inferred from homology"/>
<protein>
    <recommendedName>
        <fullName evidence="1">Large ribosomal subunit protein bL34</fullName>
    </recommendedName>
    <alternativeName>
        <fullName evidence="2">50S ribosomal protein L34</fullName>
    </alternativeName>
</protein>
<keyword id="KW-0687">Ribonucleoprotein</keyword>
<keyword id="KW-0689">Ribosomal protein</keyword>
<reference key="1">
    <citation type="journal article" date="2007" name="Genome Res.">
        <title>Reductive evolution and niche adaptation inferred from the genome of Mycobacterium ulcerans, the causative agent of Buruli ulcer.</title>
        <authorList>
            <person name="Stinear T.P."/>
            <person name="Seemann T."/>
            <person name="Pidot S."/>
            <person name="Frigui W."/>
            <person name="Reysset G."/>
            <person name="Garnier T."/>
            <person name="Meurice G."/>
            <person name="Simon D."/>
            <person name="Bouchier C."/>
            <person name="Ma L."/>
            <person name="Tichit M."/>
            <person name="Porter J.L."/>
            <person name="Ryan J."/>
            <person name="Johnson P.D.R."/>
            <person name="Davies J.K."/>
            <person name="Jenkin G.A."/>
            <person name="Small P.L.C."/>
            <person name="Jones L.M."/>
            <person name="Tekaia F."/>
            <person name="Laval F."/>
            <person name="Daffe M."/>
            <person name="Parkhill J."/>
            <person name="Cole S.T."/>
        </authorList>
    </citation>
    <scope>NUCLEOTIDE SEQUENCE [LARGE SCALE GENOMIC DNA]</scope>
    <source>
        <strain>Agy99</strain>
    </source>
</reference>
<comment type="similarity">
    <text evidence="1">Belongs to the bacterial ribosomal protein bL34 family.</text>
</comment>
<dbReference type="EMBL" id="CP000325">
    <property type="protein sequence ID" value="ABL06940.1"/>
    <property type="molecule type" value="Genomic_DNA"/>
</dbReference>
<dbReference type="SMR" id="A0PX71"/>
<dbReference type="KEGG" id="mul:MUL_5077"/>
<dbReference type="eggNOG" id="COG0230">
    <property type="taxonomic scope" value="Bacteria"/>
</dbReference>
<dbReference type="HOGENOM" id="CLU_129938_2_1_11"/>
<dbReference type="Proteomes" id="UP000000765">
    <property type="component" value="Chromosome"/>
</dbReference>
<dbReference type="GO" id="GO:1990904">
    <property type="term" value="C:ribonucleoprotein complex"/>
    <property type="evidence" value="ECO:0007669"/>
    <property type="project" value="UniProtKB-KW"/>
</dbReference>
<dbReference type="GO" id="GO:0005840">
    <property type="term" value="C:ribosome"/>
    <property type="evidence" value="ECO:0007669"/>
    <property type="project" value="UniProtKB-KW"/>
</dbReference>
<dbReference type="GO" id="GO:0003735">
    <property type="term" value="F:structural constituent of ribosome"/>
    <property type="evidence" value="ECO:0007669"/>
    <property type="project" value="InterPro"/>
</dbReference>
<dbReference type="GO" id="GO:0006412">
    <property type="term" value="P:translation"/>
    <property type="evidence" value="ECO:0007669"/>
    <property type="project" value="UniProtKB-UniRule"/>
</dbReference>
<dbReference type="Gene3D" id="1.10.287.3980">
    <property type="match status" value="1"/>
</dbReference>
<dbReference type="HAMAP" id="MF_00391">
    <property type="entry name" value="Ribosomal_bL34"/>
    <property type="match status" value="1"/>
</dbReference>
<dbReference type="InterPro" id="IPR000271">
    <property type="entry name" value="Ribosomal_bL34"/>
</dbReference>
<dbReference type="InterPro" id="IPR020939">
    <property type="entry name" value="Ribosomal_bL34_CS"/>
</dbReference>
<dbReference type="NCBIfam" id="TIGR01030">
    <property type="entry name" value="rpmH_bact"/>
    <property type="match status" value="1"/>
</dbReference>
<dbReference type="Pfam" id="PF00468">
    <property type="entry name" value="Ribosomal_L34"/>
    <property type="match status" value="1"/>
</dbReference>
<dbReference type="PROSITE" id="PS00784">
    <property type="entry name" value="RIBOSOMAL_L34"/>
    <property type="match status" value="1"/>
</dbReference>
<evidence type="ECO:0000255" key="1">
    <source>
        <dbReference type="HAMAP-Rule" id="MF_00391"/>
    </source>
</evidence>
<evidence type="ECO:0000305" key="2"/>
<feature type="chain" id="PRO_1000013381" description="Large ribosomal subunit protein bL34">
    <location>
        <begin position="1"/>
        <end position="47"/>
    </location>
</feature>
<accession>A0PX71</accession>
<gene>
    <name evidence="1" type="primary">rpmH</name>
    <name type="ordered locus">MUL_5077</name>
</gene>
<sequence length="47" mass="5547">MAKGKRTFQPNNRRRARVHGFRLRMRTRAGRAIVTGRRRKGRRALTA</sequence>
<name>RL34_MYCUA</name>